<feature type="chain" id="PRO_0000124153" description="Proteasome subunit alpha type-7-1">
    <location>
        <begin position="1"/>
        <end position="249"/>
    </location>
</feature>
<feature type="modified residue" description="Phosphoserine" evidence="3">
    <location>
        <position position="177"/>
    </location>
</feature>
<feature type="sequence conflict" description="In Ref. 1; AAA62768." evidence="5" ref="1">
    <original>T</original>
    <variation>N</variation>
    <location>
        <position position="224"/>
    </location>
</feature>
<keyword id="KW-0963">Cytoplasm</keyword>
<keyword id="KW-0539">Nucleus</keyword>
<keyword id="KW-0597">Phosphoprotein</keyword>
<keyword id="KW-0647">Proteasome</keyword>
<keyword id="KW-1185">Reference proteome</keyword>
<organism>
    <name type="scientific">Drosophila melanogaster</name>
    <name type="common">Fruit fly</name>
    <dbReference type="NCBI Taxonomy" id="7227"/>
    <lineage>
        <taxon>Eukaryota</taxon>
        <taxon>Metazoa</taxon>
        <taxon>Ecdysozoa</taxon>
        <taxon>Arthropoda</taxon>
        <taxon>Hexapoda</taxon>
        <taxon>Insecta</taxon>
        <taxon>Pterygota</taxon>
        <taxon>Neoptera</taxon>
        <taxon>Endopterygota</taxon>
        <taxon>Diptera</taxon>
        <taxon>Brachycera</taxon>
        <taxon>Muscomorpha</taxon>
        <taxon>Ephydroidea</taxon>
        <taxon>Drosophilidae</taxon>
        <taxon>Drosophila</taxon>
        <taxon>Sophophora</taxon>
    </lineage>
</organism>
<gene>
    <name type="primary">Prosalpha4</name>
    <name type="synonym">PROS-28.1</name>
    <name type="synonym">Pros28.1</name>
    <name type="ORF">CG3422</name>
</gene>
<proteinExistence type="evidence at protein level"/>
<accession>P22769</accession>
<accession>Q9VXI9</accession>
<reference key="1">
    <citation type="journal article" date="1990" name="Gene">
        <title>The Drosophila PROS-28.1 gene is a member of the proteasome gene family.</title>
        <authorList>
            <person name="Haass C."/>
            <person name="Pesold-Hurt B."/>
            <person name="Multhaup G."/>
            <person name="Beyreuther K."/>
            <person name="Kloetzel P.-M."/>
        </authorList>
    </citation>
    <scope>NUCLEOTIDE SEQUENCE [MRNA]</scope>
</reference>
<reference key="2">
    <citation type="journal article" date="1992" name="Eur. J. Biochem.">
        <title>Molecular characterization of the genomic regions of the Drosophila alpha-type subunit proteasome genes PROS-Dm28.1 and PROS-Dm35.</title>
        <authorList>
            <person name="Frentzel S."/>
            <person name="Troxell M."/>
            <person name="Haass C."/>
            <person name="Pesold-Hurt B."/>
            <person name="Glaetzer K.H."/>
            <person name="Kloetzel P.-M."/>
        </authorList>
    </citation>
    <scope>NUCLEOTIDE SEQUENCE [GENOMIC DNA]</scope>
    <source>
        <strain>Oregon-R</strain>
    </source>
</reference>
<reference key="3">
    <citation type="journal article" date="2004" name="Genetics">
        <title>Rapid evolution through gene duplication and subfunctionalization of the testes-specific alpha4 proteasome subunits in Drosophila.</title>
        <authorList>
            <person name="Torgerson D.G."/>
            <person name="Singh R.S."/>
        </authorList>
    </citation>
    <scope>NUCLEOTIDE SEQUENCE [GENOMIC DNA]</scope>
    <source>
        <strain>b pr tk</strain>
        <strain>CPA-129</strain>
        <strain>CPA-46</strain>
        <strain>Z(H)-12</strain>
        <strain>Z(H)-16</strain>
        <strain>Z(H)-34</strain>
    </source>
</reference>
<reference key="4">
    <citation type="journal article" date="2000" name="Science">
        <title>The genome sequence of Drosophila melanogaster.</title>
        <authorList>
            <person name="Adams M.D."/>
            <person name="Celniker S.E."/>
            <person name="Holt R.A."/>
            <person name="Evans C.A."/>
            <person name="Gocayne J.D."/>
            <person name="Amanatides P.G."/>
            <person name="Scherer S.E."/>
            <person name="Li P.W."/>
            <person name="Hoskins R.A."/>
            <person name="Galle R.F."/>
            <person name="George R.A."/>
            <person name="Lewis S.E."/>
            <person name="Richards S."/>
            <person name="Ashburner M."/>
            <person name="Henderson S.N."/>
            <person name="Sutton G.G."/>
            <person name="Wortman J.R."/>
            <person name="Yandell M.D."/>
            <person name="Zhang Q."/>
            <person name="Chen L.X."/>
            <person name="Brandon R.C."/>
            <person name="Rogers Y.-H.C."/>
            <person name="Blazej R.G."/>
            <person name="Champe M."/>
            <person name="Pfeiffer B.D."/>
            <person name="Wan K.H."/>
            <person name="Doyle C."/>
            <person name="Baxter E.G."/>
            <person name="Helt G."/>
            <person name="Nelson C.R."/>
            <person name="Miklos G.L.G."/>
            <person name="Abril J.F."/>
            <person name="Agbayani A."/>
            <person name="An H.-J."/>
            <person name="Andrews-Pfannkoch C."/>
            <person name="Baldwin D."/>
            <person name="Ballew R.M."/>
            <person name="Basu A."/>
            <person name="Baxendale J."/>
            <person name="Bayraktaroglu L."/>
            <person name="Beasley E.M."/>
            <person name="Beeson K.Y."/>
            <person name="Benos P.V."/>
            <person name="Berman B.P."/>
            <person name="Bhandari D."/>
            <person name="Bolshakov S."/>
            <person name="Borkova D."/>
            <person name="Botchan M.R."/>
            <person name="Bouck J."/>
            <person name="Brokstein P."/>
            <person name="Brottier P."/>
            <person name="Burtis K.C."/>
            <person name="Busam D.A."/>
            <person name="Butler H."/>
            <person name="Cadieu E."/>
            <person name="Center A."/>
            <person name="Chandra I."/>
            <person name="Cherry J.M."/>
            <person name="Cawley S."/>
            <person name="Dahlke C."/>
            <person name="Davenport L.B."/>
            <person name="Davies P."/>
            <person name="de Pablos B."/>
            <person name="Delcher A."/>
            <person name="Deng Z."/>
            <person name="Mays A.D."/>
            <person name="Dew I."/>
            <person name="Dietz S.M."/>
            <person name="Dodson K."/>
            <person name="Doup L.E."/>
            <person name="Downes M."/>
            <person name="Dugan-Rocha S."/>
            <person name="Dunkov B.C."/>
            <person name="Dunn P."/>
            <person name="Durbin K.J."/>
            <person name="Evangelista C.C."/>
            <person name="Ferraz C."/>
            <person name="Ferriera S."/>
            <person name="Fleischmann W."/>
            <person name="Fosler C."/>
            <person name="Gabrielian A.E."/>
            <person name="Garg N.S."/>
            <person name="Gelbart W.M."/>
            <person name="Glasser K."/>
            <person name="Glodek A."/>
            <person name="Gong F."/>
            <person name="Gorrell J.H."/>
            <person name="Gu Z."/>
            <person name="Guan P."/>
            <person name="Harris M."/>
            <person name="Harris N.L."/>
            <person name="Harvey D.A."/>
            <person name="Heiman T.J."/>
            <person name="Hernandez J.R."/>
            <person name="Houck J."/>
            <person name="Hostin D."/>
            <person name="Houston K.A."/>
            <person name="Howland T.J."/>
            <person name="Wei M.-H."/>
            <person name="Ibegwam C."/>
            <person name="Jalali M."/>
            <person name="Kalush F."/>
            <person name="Karpen G.H."/>
            <person name="Ke Z."/>
            <person name="Kennison J.A."/>
            <person name="Ketchum K.A."/>
            <person name="Kimmel B.E."/>
            <person name="Kodira C.D."/>
            <person name="Kraft C.L."/>
            <person name="Kravitz S."/>
            <person name="Kulp D."/>
            <person name="Lai Z."/>
            <person name="Lasko P."/>
            <person name="Lei Y."/>
            <person name="Levitsky A.A."/>
            <person name="Li J.H."/>
            <person name="Li Z."/>
            <person name="Liang Y."/>
            <person name="Lin X."/>
            <person name="Liu X."/>
            <person name="Mattei B."/>
            <person name="McIntosh T.C."/>
            <person name="McLeod M.P."/>
            <person name="McPherson D."/>
            <person name="Merkulov G."/>
            <person name="Milshina N.V."/>
            <person name="Mobarry C."/>
            <person name="Morris J."/>
            <person name="Moshrefi A."/>
            <person name="Mount S.M."/>
            <person name="Moy M."/>
            <person name="Murphy B."/>
            <person name="Murphy L."/>
            <person name="Muzny D.M."/>
            <person name="Nelson D.L."/>
            <person name="Nelson D.R."/>
            <person name="Nelson K.A."/>
            <person name="Nixon K."/>
            <person name="Nusskern D.R."/>
            <person name="Pacleb J.M."/>
            <person name="Palazzolo M."/>
            <person name="Pittman G.S."/>
            <person name="Pan S."/>
            <person name="Pollard J."/>
            <person name="Puri V."/>
            <person name="Reese M.G."/>
            <person name="Reinert K."/>
            <person name="Remington K."/>
            <person name="Saunders R.D.C."/>
            <person name="Scheeler F."/>
            <person name="Shen H."/>
            <person name="Shue B.C."/>
            <person name="Siden-Kiamos I."/>
            <person name="Simpson M."/>
            <person name="Skupski M.P."/>
            <person name="Smith T.J."/>
            <person name="Spier E."/>
            <person name="Spradling A.C."/>
            <person name="Stapleton M."/>
            <person name="Strong R."/>
            <person name="Sun E."/>
            <person name="Svirskas R."/>
            <person name="Tector C."/>
            <person name="Turner R."/>
            <person name="Venter E."/>
            <person name="Wang A.H."/>
            <person name="Wang X."/>
            <person name="Wang Z.-Y."/>
            <person name="Wassarman D.A."/>
            <person name="Weinstock G.M."/>
            <person name="Weissenbach J."/>
            <person name="Williams S.M."/>
            <person name="Woodage T."/>
            <person name="Worley K.C."/>
            <person name="Wu D."/>
            <person name="Yang S."/>
            <person name="Yao Q.A."/>
            <person name="Ye J."/>
            <person name="Yeh R.-F."/>
            <person name="Zaveri J.S."/>
            <person name="Zhan M."/>
            <person name="Zhang G."/>
            <person name="Zhao Q."/>
            <person name="Zheng L."/>
            <person name="Zheng X.H."/>
            <person name="Zhong F.N."/>
            <person name="Zhong W."/>
            <person name="Zhou X."/>
            <person name="Zhu S.C."/>
            <person name="Zhu X."/>
            <person name="Smith H.O."/>
            <person name="Gibbs R.A."/>
            <person name="Myers E.W."/>
            <person name="Rubin G.M."/>
            <person name="Venter J.C."/>
        </authorList>
    </citation>
    <scope>NUCLEOTIDE SEQUENCE [LARGE SCALE GENOMIC DNA]</scope>
    <source>
        <strain>Berkeley</strain>
    </source>
</reference>
<reference key="5">
    <citation type="journal article" date="2002" name="Genome Biol.">
        <title>Annotation of the Drosophila melanogaster euchromatic genome: a systematic review.</title>
        <authorList>
            <person name="Misra S."/>
            <person name="Crosby M.A."/>
            <person name="Mungall C.J."/>
            <person name="Matthews B.B."/>
            <person name="Campbell K.S."/>
            <person name="Hradecky P."/>
            <person name="Huang Y."/>
            <person name="Kaminker J.S."/>
            <person name="Millburn G.H."/>
            <person name="Prochnik S.E."/>
            <person name="Smith C.D."/>
            <person name="Tupy J.L."/>
            <person name="Whitfield E.J."/>
            <person name="Bayraktaroglu L."/>
            <person name="Berman B.P."/>
            <person name="Bettencourt B.R."/>
            <person name="Celniker S.E."/>
            <person name="de Grey A.D.N.J."/>
            <person name="Drysdale R.A."/>
            <person name="Harris N.L."/>
            <person name="Richter J."/>
            <person name="Russo S."/>
            <person name="Schroeder A.J."/>
            <person name="Shu S.Q."/>
            <person name="Stapleton M."/>
            <person name="Yamada C."/>
            <person name="Ashburner M."/>
            <person name="Gelbart W.M."/>
            <person name="Rubin G.M."/>
            <person name="Lewis S.E."/>
        </authorList>
    </citation>
    <scope>GENOME REANNOTATION</scope>
    <source>
        <strain>Berkeley</strain>
    </source>
</reference>
<reference key="6">
    <citation type="journal article" date="2002" name="Genome Biol.">
        <title>A Drosophila full-length cDNA resource.</title>
        <authorList>
            <person name="Stapleton M."/>
            <person name="Carlson J.W."/>
            <person name="Brokstein P."/>
            <person name="Yu C."/>
            <person name="Champe M."/>
            <person name="George R.A."/>
            <person name="Guarin H."/>
            <person name="Kronmiller B."/>
            <person name="Pacleb J.M."/>
            <person name="Park S."/>
            <person name="Wan K.H."/>
            <person name="Rubin G.M."/>
            <person name="Celniker S.E."/>
        </authorList>
    </citation>
    <scope>NUCLEOTIDE SEQUENCE [LARGE SCALE MRNA]</scope>
    <source>
        <strain>Berkeley</strain>
        <tissue>Embryo</tissue>
    </source>
</reference>
<reference key="7">
    <citation type="journal article" date="2008" name="J. Proteome Res.">
        <title>Phosphoproteome analysis of Drosophila melanogaster embryos.</title>
        <authorList>
            <person name="Zhai B."/>
            <person name="Villen J."/>
            <person name="Beausoleil S.A."/>
            <person name="Mintseris J."/>
            <person name="Gygi S.P."/>
        </authorList>
    </citation>
    <scope>PHOSPHORYLATION [LARGE SCALE ANALYSIS] AT SER-177</scope>
    <scope>IDENTIFICATION BY MASS SPECTROMETRY</scope>
    <source>
        <tissue>Embryo</tissue>
    </source>
</reference>
<reference key="8">
    <citation type="journal article" date="2013" name="Cell">
        <title>Proteasome regulation by ADP-ribosylation.</title>
        <authorList>
            <person name="Cho-Park P.F."/>
            <person name="Steller H."/>
        </authorList>
    </citation>
    <scope>INTERACTION WITH PI31</scope>
</reference>
<comment type="function">
    <text>The proteasome is a multicatalytic proteinase complex which is characterized by its ability to cleave peptides with Arg, Phe, Tyr, Leu, and Glu adjacent to the leaving group at neutral or slightly basic pH. The proteasome has an ATP-dependent proteolytic activity.</text>
</comment>
<comment type="subunit">
    <text evidence="1 4">The 26S proteasome consists of a 20S proteasome core and two 19S regulatory subunits. The 20S proteasome core is composed of 28 subunits that are arranged in four stacked rings, resulting in a barrel-shaped structure. The two end rings are each formed by seven alpha subunits, and the two central rings are each formed by seven beta subunits. The catalytic chamber with the active sites is on the inside of the barrel (By similarity). Interacts with PI31; this interaction is reduced by PI31 ADP-ribosylation.</text>
</comment>
<comment type="interaction">
    <interactant intactId="EBI-93148">
        <id>P22769</id>
    </interactant>
    <interactant intactId="EBI-3416638">
        <id>Q9XZJ4</id>
        <label>Prosalpha1</label>
    </interactant>
    <organismsDiffer>false</organismsDiffer>
    <experiments>3</experiments>
</comment>
<comment type="interaction">
    <interactant intactId="EBI-93148">
        <id>P22769</id>
    </interactant>
    <interactant intactId="EBI-142547">
        <id>Q95083</id>
        <label>Prosalpha5</label>
    </interactant>
    <organismsDiffer>false</organismsDiffer>
    <experiments>3</experiments>
</comment>
<comment type="interaction">
    <interactant intactId="EBI-93148">
        <id>P22769</id>
    </interactant>
    <interactant intactId="EBI-116800">
        <id>Q7K148</id>
        <label>Prosbeta5</label>
    </interactant>
    <organismsDiffer>false</organismsDiffer>
    <experiments>3</experiments>
</comment>
<comment type="subcellular location">
    <subcellularLocation>
        <location evidence="1">Cytoplasm</location>
    </subcellularLocation>
    <subcellularLocation>
        <location evidence="1">Nucleus</location>
    </subcellularLocation>
</comment>
<comment type="similarity">
    <text evidence="2">Belongs to the peptidase T1A family.</text>
</comment>
<protein>
    <recommendedName>
        <fullName>Proteasome subunit alpha type-7-1</fullName>
    </recommendedName>
    <alternativeName>
        <fullName>PROS-Dm28.1</fullName>
    </alternativeName>
    <alternativeName>
        <fullName>Proteasome 28 kDa subunit 1</fullName>
    </alternativeName>
</protein>
<sequence>MSSRYDRAVTIFSPDGHLLQVEYAQEAVRKGSTAVGVRGANCVVLGVEKKSVAQLQEDRKVRKICMLDNHVVMAFAGLTADARIMINRAQVECQSHRLNVEDPVTLEYITRFIAQLKQKYTQSNGRRPFGISCLIGGFDADGSAHLFQTEPSGIFYEYKANATGRSAKVVREFFEKSYREEEVANEHGAVKLAIRALLEVAQSGQNNLEVAIMENGKPLKMLDTDVITDYVKIIEKEKEEELEKKKQKK</sequence>
<evidence type="ECO:0000250" key="1"/>
<evidence type="ECO:0000255" key="2">
    <source>
        <dbReference type="PROSITE-ProRule" id="PRU00808"/>
    </source>
</evidence>
<evidence type="ECO:0000269" key="3">
    <source>
    </source>
</evidence>
<evidence type="ECO:0000269" key="4">
    <source>
    </source>
</evidence>
<evidence type="ECO:0000305" key="5"/>
<name>PSA71_DROME</name>
<dbReference type="EMBL" id="M57712">
    <property type="protein sequence ID" value="AAA62768.1"/>
    <property type="molecule type" value="mRNA"/>
</dbReference>
<dbReference type="EMBL" id="X62286">
    <property type="protein sequence ID" value="CAA44174.1"/>
    <property type="molecule type" value="Genomic_DNA"/>
</dbReference>
<dbReference type="EMBL" id="AY542383">
    <property type="protein sequence ID" value="AAS86210.1"/>
    <property type="molecule type" value="Genomic_DNA"/>
</dbReference>
<dbReference type="EMBL" id="AY542384">
    <property type="protein sequence ID" value="AAS86211.1"/>
    <property type="molecule type" value="Genomic_DNA"/>
</dbReference>
<dbReference type="EMBL" id="AY542385">
    <property type="protein sequence ID" value="AAS86212.1"/>
    <property type="molecule type" value="Genomic_DNA"/>
</dbReference>
<dbReference type="EMBL" id="AY542386">
    <property type="protein sequence ID" value="AAS86213.1"/>
    <property type="molecule type" value="Genomic_DNA"/>
</dbReference>
<dbReference type="EMBL" id="AY542387">
    <property type="protein sequence ID" value="AAS86214.1"/>
    <property type="molecule type" value="Genomic_DNA"/>
</dbReference>
<dbReference type="EMBL" id="AY542388">
    <property type="protein sequence ID" value="AAS86215.1"/>
    <property type="molecule type" value="Genomic_DNA"/>
</dbReference>
<dbReference type="EMBL" id="AY542389">
    <property type="protein sequence ID" value="AAS86216.1"/>
    <property type="molecule type" value="Genomic_DNA"/>
</dbReference>
<dbReference type="EMBL" id="AE014298">
    <property type="protein sequence ID" value="AAF48573.1"/>
    <property type="molecule type" value="Genomic_DNA"/>
</dbReference>
<dbReference type="EMBL" id="AY071241">
    <property type="protein sequence ID" value="AAL48863.1"/>
    <property type="molecule type" value="mRNA"/>
</dbReference>
<dbReference type="PIR" id="JQ0681">
    <property type="entry name" value="JQ0681"/>
</dbReference>
<dbReference type="PIR" id="S23451">
    <property type="entry name" value="S23451"/>
</dbReference>
<dbReference type="RefSeq" id="NP_525092.1">
    <property type="nucleotide sequence ID" value="NM_080353.5"/>
</dbReference>
<dbReference type="SMR" id="P22769"/>
<dbReference type="BioGRID" id="58925">
    <property type="interactions" value="55"/>
</dbReference>
<dbReference type="ComplexPortal" id="CPX-9070">
    <property type="entry name" value="26S proteasome complex"/>
</dbReference>
<dbReference type="DIP" id="DIP-17376N"/>
<dbReference type="FunCoup" id="P22769">
    <property type="interactions" value="1116"/>
</dbReference>
<dbReference type="IntAct" id="P22769">
    <property type="interactions" value="118"/>
</dbReference>
<dbReference type="STRING" id="7227.FBpp0073989"/>
<dbReference type="iPTMnet" id="P22769"/>
<dbReference type="PaxDb" id="7227-FBpp0073989"/>
<dbReference type="DNASU" id="32584"/>
<dbReference type="EnsemblMetazoa" id="FBtr0074210">
    <property type="protein sequence ID" value="FBpp0073989"/>
    <property type="gene ID" value="FBgn0004066"/>
</dbReference>
<dbReference type="GeneID" id="32584"/>
<dbReference type="KEGG" id="dme:Dmel_CG3422"/>
<dbReference type="AGR" id="FB:FBgn0004066"/>
<dbReference type="CTD" id="32584"/>
<dbReference type="FlyBase" id="FBgn0004066">
    <property type="gene designation" value="Prosalpha4"/>
</dbReference>
<dbReference type="VEuPathDB" id="VectorBase:FBgn0004066"/>
<dbReference type="eggNOG" id="KOG0183">
    <property type="taxonomic scope" value="Eukaryota"/>
</dbReference>
<dbReference type="GeneTree" id="ENSGT00940000167759"/>
<dbReference type="HOGENOM" id="CLU_035750_4_0_1"/>
<dbReference type="InParanoid" id="P22769"/>
<dbReference type="OMA" id="ICMLDHH"/>
<dbReference type="OrthoDB" id="3145928at2759"/>
<dbReference type="PhylomeDB" id="P22769"/>
<dbReference type="Reactome" id="R-DME-1169091">
    <property type="pathway name" value="Activation of NF-kappaB in B cells"/>
</dbReference>
<dbReference type="Reactome" id="R-DME-1234176">
    <property type="pathway name" value="Oxygen-dependent proline hydroxylation of Hypoxia-inducible Factor Alpha"/>
</dbReference>
<dbReference type="Reactome" id="R-DME-1236978">
    <property type="pathway name" value="Cross-presentation of soluble exogenous antigens (endosomes)"/>
</dbReference>
<dbReference type="Reactome" id="R-DME-174084">
    <property type="pathway name" value="Autodegradation of Cdh1 by Cdh1:APC/C"/>
</dbReference>
<dbReference type="Reactome" id="R-DME-174154">
    <property type="pathway name" value="APC/C:Cdc20 mediated degradation of Securin"/>
</dbReference>
<dbReference type="Reactome" id="R-DME-174178">
    <property type="pathway name" value="APC/C:Cdh1 mediated degradation of Cdc20 and other APC/C:Cdh1 targeted proteins in late mitosis/early G1"/>
</dbReference>
<dbReference type="Reactome" id="R-DME-174184">
    <property type="pathway name" value="Cdc20:Phospho-APC/C mediated degradation of Cyclin A"/>
</dbReference>
<dbReference type="Reactome" id="R-DME-187577">
    <property type="pathway name" value="SCF(Skp2)-mediated degradation of p27/p21"/>
</dbReference>
<dbReference type="Reactome" id="R-DME-195253">
    <property type="pathway name" value="Degradation of beta-catenin by the destruction complex"/>
</dbReference>
<dbReference type="Reactome" id="R-DME-202424">
    <property type="pathway name" value="Downstream TCR signaling"/>
</dbReference>
<dbReference type="Reactome" id="R-DME-209360">
    <property type="pathway name" value="Ubiquitination and proteolysis of phosphorylated CI"/>
</dbReference>
<dbReference type="Reactome" id="R-DME-209406">
    <property type="pathway name" value="Degradation of NF-kappa-B inhibitor, CACT"/>
</dbReference>
<dbReference type="Reactome" id="R-DME-209461">
    <property type="pathway name" value="Ubiquitination and degradation of phosphorylated ARM"/>
</dbReference>
<dbReference type="Reactome" id="R-DME-216167">
    <property type="pathway name" value="Nuclear CI is degraded"/>
</dbReference>
<dbReference type="Reactome" id="R-DME-2467813">
    <property type="pathway name" value="Separation of Sister Chromatids"/>
</dbReference>
<dbReference type="Reactome" id="R-DME-2871837">
    <property type="pathway name" value="FCERI mediated NF-kB activation"/>
</dbReference>
<dbReference type="Reactome" id="R-DME-350562">
    <property type="pathway name" value="Regulation of ornithine decarboxylase (ODC)"/>
</dbReference>
<dbReference type="Reactome" id="R-DME-382556">
    <property type="pathway name" value="ABC-family proteins mediated transport"/>
</dbReference>
<dbReference type="Reactome" id="R-DME-432395">
    <property type="pathway name" value="Degradation of TIM"/>
</dbReference>
<dbReference type="Reactome" id="R-DME-432524">
    <property type="pathway name" value="Degradation of PER"/>
</dbReference>
<dbReference type="Reactome" id="R-DME-432626">
    <property type="pathway name" value="Circadian Clock pathway"/>
</dbReference>
<dbReference type="Reactome" id="R-DME-450408">
    <property type="pathway name" value="AUF1 (hnRNP D0) binds and destabilizes mRNA"/>
</dbReference>
<dbReference type="Reactome" id="R-DME-4608870">
    <property type="pathway name" value="Asymmetric localization of PCP proteins"/>
</dbReference>
<dbReference type="Reactome" id="R-DME-4641257">
    <property type="pathway name" value="Degradation of AXIN"/>
</dbReference>
<dbReference type="Reactome" id="R-DME-4641258">
    <property type="pathway name" value="Degradation of DVL"/>
</dbReference>
<dbReference type="Reactome" id="R-DME-5358346">
    <property type="pathway name" value="Hedgehog ligand biogenesis"/>
</dbReference>
<dbReference type="Reactome" id="R-DME-538864">
    <property type="pathway name" value="Degradation of CRY"/>
</dbReference>
<dbReference type="Reactome" id="R-DME-5607761">
    <property type="pathway name" value="Dectin-1 mediated noncanonical NF-kB signaling"/>
</dbReference>
<dbReference type="Reactome" id="R-DME-5607764">
    <property type="pathway name" value="CLEC7A (Dectin-1) signaling"/>
</dbReference>
<dbReference type="Reactome" id="R-DME-5610780">
    <property type="pathway name" value="Degradation of GLI1 by the proteasome"/>
</dbReference>
<dbReference type="Reactome" id="R-DME-5610785">
    <property type="pathway name" value="GLI3 is processed to GLI3R by the proteasome"/>
</dbReference>
<dbReference type="Reactome" id="R-DME-5632684">
    <property type="pathway name" value="Hedgehog 'on' state"/>
</dbReference>
<dbReference type="Reactome" id="R-DME-5658442">
    <property type="pathway name" value="Regulation of RAS by GAPs"/>
</dbReference>
<dbReference type="Reactome" id="R-DME-5676590">
    <property type="pathway name" value="NIK--&gt;noncanonical NF-kB signaling"/>
</dbReference>
<dbReference type="Reactome" id="R-DME-5689603">
    <property type="pathway name" value="UCH proteinases"/>
</dbReference>
<dbReference type="Reactome" id="R-DME-5689880">
    <property type="pathway name" value="Ub-specific processing proteases"/>
</dbReference>
<dbReference type="Reactome" id="R-DME-68949">
    <property type="pathway name" value="Orc1 removal from chromatin"/>
</dbReference>
<dbReference type="Reactome" id="R-DME-69017">
    <property type="pathway name" value="CDK-mediated phosphorylation and removal of Cdc6"/>
</dbReference>
<dbReference type="Reactome" id="R-DME-69601">
    <property type="pathway name" value="Ubiquitin Mediated Degradation of Phosphorylated Cdc25A"/>
</dbReference>
<dbReference type="Reactome" id="R-DME-75815">
    <property type="pathway name" value="Ubiquitin-dependent degradation of Cyclin D"/>
</dbReference>
<dbReference type="Reactome" id="R-DME-8854050">
    <property type="pathway name" value="FBXL7 down-regulates AURKA during mitotic entry and in early mitosis"/>
</dbReference>
<dbReference type="Reactome" id="R-DME-8939236">
    <property type="pathway name" value="RUNX1 regulates transcription of genes involved in differentiation of HSCs"/>
</dbReference>
<dbReference type="Reactome" id="R-DME-8939902">
    <property type="pathway name" value="Regulation of RUNX2 expression and activity"/>
</dbReference>
<dbReference type="Reactome" id="R-DME-8941858">
    <property type="pathway name" value="Regulation of RUNX3 expression and activity"/>
</dbReference>
<dbReference type="Reactome" id="R-DME-8948751">
    <property type="pathway name" value="Regulation of PTEN stability and activity"/>
</dbReference>
<dbReference type="Reactome" id="R-DME-8951664">
    <property type="pathway name" value="Neddylation"/>
</dbReference>
<dbReference type="Reactome" id="R-DME-9020702">
    <property type="pathway name" value="Interleukin-1 signaling"/>
</dbReference>
<dbReference type="Reactome" id="R-DME-9755511">
    <property type="pathway name" value="KEAP1-NFE2L2 pathway"/>
</dbReference>
<dbReference type="Reactome" id="R-DME-9762114">
    <property type="pathway name" value="GSK3B and BTRC:CUL1-mediated-degradation of NFE2L2"/>
</dbReference>
<dbReference type="Reactome" id="R-DME-983168">
    <property type="pathway name" value="Antigen processing: Ubiquitination &amp; Proteasome degradation"/>
</dbReference>
<dbReference type="Reactome" id="R-DME-9907900">
    <property type="pathway name" value="Proteasome assembly"/>
</dbReference>
<dbReference type="BioGRID-ORCS" id="32584">
    <property type="hits" value="1 hit in 3 CRISPR screens"/>
</dbReference>
<dbReference type="GenomeRNAi" id="32584"/>
<dbReference type="PRO" id="PR:P22769"/>
<dbReference type="Proteomes" id="UP000000803">
    <property type="component" value="Chromosome X"/>
</dbReference>
<dbReference type="Bgee" id="FBgn0004066">
    <property type="expression patterns" value="Expressed in adult oenocyte (Drosophila) in dorsal vessel heart and 188 other cell types or tissues"/>
</dbReference>
<dbReference type="GO" id="GO:0005829">
    <property type="term" value="C:cytosol"/>
    <property type="evidence" value="ECO:0000304"/>
    <property type="project" value="Reactome"/>
</dbReference>
<dbReference type="GO" id="GO:0005654">
    <property type="term" value="C:nucleoplasm"/>
    <property type="evidence" value="ECO:0000304"/>
    <property type="project" value="Reactome"/>
</dbReference>
<dbReference type="GO" id="GO:0005634">
    <property type="term" value="C:nucleus"/>
    <property type="evidence" value="ECO:0000318"/>
    <property type="project" value="GO_Central"/>
</dbReference>
<dbReference type="GO" id="GO:0000502">
    <property type="term" value="C:proteasome complex"/>
    <property type="evidence" value="ECO:0000314"/>
    <property type="project" value="FlyBase"/>
</dbReference>
<dbReference type="GO" id="GO:0005839">
    <property type="term" value="C:proteasome core complex"/>
    <property type="evidence" value="ECO:0000314"/>
    <property type="project" value="FlyBase"/>
</dbReference>
<dbReference type="GO" id="GO:0019773">
    <property type="term" value="C:proteasome core complex, alpha-subunit complex"/>
    <property type="evidence" value="ECO:0000250"/>
    <property type="project" value="UniProtKB"/>
</dbReference>
<dbReference type="GO" id="GO:0043161">
    <property type="term" value="P:proteasome-mediated ubiquitin-dependent protein catabolic process"/>
    <property type="evidence" value="ECO:0000318"/>
    <property type="project" value="GO_Central"/>
</dbReference>
<dbReference type="CDD" id="cd03755">
    <property type="entry name" value="proteasome_alpha_type_7"/>
    <property type="match status" value="1"/>
</dbReference>
<dbReference type="FunFam" id="3.60.20.10:FF:000059">
    <property type="entry name" value="Proteasome subunit alpha type"/>
    <property type="match status" value="1"/>
</dbReference>
<dbReference type="Gene3D" id="3.60.20.10">
    <property type="entry name" value="Glutamine Phosphoribosylpyrophosphate, subunit 1, domain 1"/>
    <property type="match status" value="1"/>
</dbReference>
<dbReference type="InterPro" id="IPR029055">
    <property type="entry name" value="Ntn_hydrolases_N"/>
</dbReference>
<dbReference type="InterPro" id="IPR050115">
    <property type="entry name" value="Proteasome_alpha"/>
</dbReference>
<dbReference type="InterPro" id="IPR023332">
    <property type="entry name" value="Proteasome_alpha-type"/>
</dbReference>
<dbReference type="InterPro" id="IPR000426">
    <property type="entry name" value="Proteasome_asu_N"/>
</dbReference>
<dbReference type="InterPro" id="IPR001353">
    <property type="entry name" value="Proteasome_sua/b"/>
</dbReference>
<dbReference type="NCBIfam" id="NF003075">
    <property type="entry name" value="PRK03996.1"/>
    <property type="match status" value="1"/>
</dbReference>
<dbReference type="PANTHER" id="PTHR11599">
    <property type="entry name" value="PROTEASOME SUBUNIT ALPHA/BETA"/>
    <property type="match status" value="1"/>
</dbReference>
<dbReference type="Pfam" id="PF00227">
    <property type="entry name" value="Proteasome"/>
    <property type="match status" value="1"/>
</dbReference>
<dbReference type="Pfam" id="PF10584">
    <property type="entry name" value="Proteasome_A_N"/>
    <property type="match status" value="1"/>
</dbReference>
<dbReference type="SMART" id="SM00948">
    <property type="entry name" value="Proteasome_A_N"/>
    <property type="match status" value="1"/>
</dbReference>
<dbReference type="SUPFAM" id="SSF56235">
    <property type="entry name" value="N-terminal nucleophile aminohydrolases (Ntn hydrolases)"/>
    <property type="match status" value="1"/>
</dbReference>
<dbReference type="PROSITE" id="PS00388">
    <property type="entry name" value="PROTEASOME_ALPHA_1"/>
    <property type="match status" value="1"/>
</dbReference>
<dbReference type="PROSITE" id="PS51475">
    <property type="entry name" value="PROTEASOME_ALPHA_2"/>
    <property type="match status" value="1"/>
</dbReference>